<organism>
    <name type="scientific">Streptococcus agalactiae serotype V (strain ATCC BAA-611 / 2603 V/R)</name>
    <dbReference type="NCBI Taxonomy" id="208435"/>
    <lineage>
        <taxon>Bacteria</taxon>
        <taxon>Bacillati</taxon>
        <taxon>Bacillota</taxon>
        <taxon>Bacilli</taxon>
        <taxon>Lactobacillales</taxon>
        <taxon>Streptococcaceae</taxon>
        <taxon>Streptococcus</taxon>
    </lineage>
</organism>
<comment type="function">
    <text evidence="1">Putative tyrosine recombinase. Not involved in the cutting and rejoining of the recombining DNA molecules on dif(SL) site.</text>
</comment>
<comment type="subcellular location">
    <subcellularLocation>
        <location evidence="1">Cytoplasm</location>
    </subcellularLocation>
</comment>
<comment type="similarity">
    <text evidence="1">Belongs to the 'phage' integrase family. XerD-like subfamily.</text>
</comment>
<accession>Q8DY96</accession>
<reference key="1">
    <citation type="journal article" date="2002" name="Proc. Natl. Acad. Sci. U.S.A.">
        <title>Complete genome sequence and comparative genomic analysis of an emerging human pathogen, serotype V Streptococcus agalactiae.</title>
        <authorList>
            <person name="Tettelin H."/>
            <person name="Masignani V."/>
            <person name="Cieslewicz M.J."/>
            <person name="Eisen J.A."/>
            <person name="Peterson S.N."/>
            <person name="Wessels M.R."/>
            <person name="Paulsen I.T."/>
            <person name="Nelson K.E."/>
            <person name="Margarit I."/>
            <person name="Read T.D."/>
            <person name="Madoff L.C."/>
            <person name="Wolf A.M."/>
            <person name="Beanan M.J."/>
            <person name="Brinkac L.M."/>
            <person name="Daugherty S.C."/>
            <person name="DeBoy R.T."/>
            <person name="Durkin A.S."/>
            <person name="Kolonay J.F."/>
            <person name="Madupu R."/>
            <person name="Lewis M.R."/>
            <person name="Radune D."/>
            <person name="Fedorova N.B."/>
            <person name="Scanlan D."/>
            <person name="Khouri H.M."/>
            <person name="Mulligan S."/>
            <person name="Carty H.A."/>
            <person name="Cline R.T."/>
            <person name="Van Aken S.E."/>
            <person name="Gill J."/>
            <person name="Scarselli M."/>
            <person name="Mora M."/>
            <person name="Iacobini E.T."/>
            <person name="Brettoni C."/>
            <person name="Galli G."/>
            <person name="Mariani M."/>
            <person name="Vegni F."/>
            <person name="Maione D."/>
            <person name="Rinaudo D."/>
            <person name="Rappuoli R."/>
            <person name="Telford J.L."/>
            <person name="Kasper D.L."/>
            <person name="Grandi G."/>
            <person name="Fraser C.M."/>
        </authorList>
    </citation>
    <scope>NUCLEOTIDE SEQUENCE [LARGE SCALE GENOMIC DNA]</scope>
    <source>
        <strain>ATCC BAA-611 / 2603 V/R</strain>
    </source>
</reference>
<gene>
    <name type="ordered locus">SAG1596</name>
</gene>
<evidence type="ECO:0000255" key="1">
    <source>
        <dbReference type="HAMAP-Rule" id="MF_01817"/>
    </source>
</evidence>
<evidence type="ECO:0000255" key="2">
    <source>
        <dbReference type="PROSITE-ProRule" id="PRU01246"/>
    </source>
</evidence>
<evidence type="ECO:0000255" key="3">
    <source>
        <dbReference type="PROSITE-ProRule" id="PRU01248"/>
    </source>
</evidence>
<name>XERDL_STRA5</name>
<keyword id="KW-0963">Cytoplasm</keyword>
<keyword id="KW-0229">DNA integration</keyword>
<keyword id="KW-0233">DNA recombination</keyword>
<keyword id="KW-0238">DNA-binding</keyword>
<keyword id="KW-1185">Reference proteome</keyword>
<protein>
    <recommendedName>
        <fullName evidence="1">Tyrosine recombinase XerD-like</fullName>
    </recommendedName>
</protein>
<feature type="chain" id="PRO_0000095437" description="Tyrosine recombinase XerD-like">
    <location>
        <begin position="1"/>
        <end position="246"/>
    </location>
</feature>
<feature type="domain" description="Core-binding (CB)" evidence="3">
    <location>
        <begin position="1"/>
        <end position="72"/>
    </location>
</feature>
<feature type="domain" description="Tyr recombinase" evidence="2">
    <location>
        <begin position="84"/>
        <end position="246"/>
    </location>
</feature>
<feature type="active site" evidence="2">
    <location>
        <position position="149"/>
    </location>
</feature>
<feature type="active site" evidence="2">
    <location>
        <position position="212"/>
    </location>
</feature>
<feature type="active site" description="O-(3'-phospho-DNA)-tyrosine intermediate" evidence="2">
    <location>
        <position position="244"/>
    </location>
</feature>
<dbReference type="EMBL" id="AE009948">
    <property type="protein sequence ID" value="AAN00460.1"/>
    <property type="molecule type" value="Genomic_DNA"/>
</dbReference>
<dbReference type="RefSeq" id="NP_688587.1">
    <property type="nucleotide sequence ID" value="NC_004116.1"/>
</dbReference>
<dbReference type="SMR" id="Q8DY96"/>
<dbReference type="STRING" id="208435.SAG1596"/>
<dbReference type="KEGG" id="sag:SAG1596"/>
<dbReference type="PATRIC" id="fig|208435.3.peg.1606"/>
<dbReference type="HOGENOM" id="CLU_1128554_0_0_9"/>
<dbReference type="OrthoDB" id="2241487at2"/>
<dbReference type="Proteomes" id="UP000000821">
    <property type="component" value="Chromosome"/>
</dbReference>
<dbReference type="GO" id="GO:0005737">
    <property type="term" value="C:cytoplasm"/>
    <property type="evidence" value="ECO:0007669"/>
    <property type="project" value="UniProtKB-SubCell"/>
</dbReference>
<dbReference type="GO" id="GO:0003677">
    <property type="term" value="F:DNA binding"/>
    <property type="evidence" value="ECO:0007669"/>
    <property type="project" value="UniProtKB-KW"/>
</dbReference>
<dbReference type="GO" id="GO:0009037">
    <property type="term" value="F:tyrosine-based site-specific recombinase activity"/>
    <property type="evidence" value="ECO:0007669"/>
    <property type="project" value="UniProtKB-UniRule"/>
</dbReference>
<dbReference type="GO" id="GO:0006313">
    <property type="term" value="P:DNA transposition"/>
    <property type="evidence" value="ECO:0007669"/>
    <property type="project" value="UniProtKB-UniRule"/>
</dbReference>
<dbReference type="CDD" id="cd01190">
    <property type="entry name" value="INT_StrepXerD_C_like"/>
    <property type="match status" value="1"/>
</dbReference>
<dbReference type="Gene3D" id="1.10.150.130">
    <property type="match status" value="1"/>
</dbReference>
<dbReference type="Gene3D" id="1.10.443.10">
    <property type="entry name" value="Intergrase catalytic core"/>
    <property type="match status" value="1"/>
</dbReference>
<dbReference type="HAMAP" id="MF_01817">
    <property type="entry name" value="Recomb_XerD_like"/>
    <property type="match status" value="1"/>
</dbReference>
<dbReference type="InterPro" id="IPR044068">
    <property type="entry name" value="CB"/>
</dbReference>
<dbReference type="InterPro" id="IPR011010">
    <property type="entry name" value="DNA_brk_join_enz"/>
</dbReference>
<dbReference type="InterPro" id="IPR013762">
    <property type="entry name" value="Integrase-like_cat_sf"/>
</dbReference>
<dbReference type="InterPro" id="IPR002104">
    <property type="entry name" value="Integrase_catalytic"/>
</dbReference>
<dbReference type="InterPro" id="IPR010998">
    <property type="entry name" value="Integrase_recombinase_N"/>
</dbReference>
<dbReference type="InterPro" id="IPR020876">
    <property type="entry name" value="Tyrosine_recombinase_XerD-like"/>
</dbReference>
<dbReference type="NCBIfam" id="NF002685">
    <property type="entry name" value="PRK02436.1"/>
    <property type="match status" value="1"/>
</dbReference>
<dbReference type="Pfam" id="PF00589">
    <property type="entry name" value="Phage_integrase"/>
    <property type="match status" value="1"/>
</dbReference>
<dbReference type="SUPFAM" id="SSF56349">
    <property type="entry name" value="DNA breaking-rejoining enzymes"/>
    <property type="match status" value="1"/>
</dbReference>
<dbReference type="PROSITE" id="PS51900">
    <property type="entry name" value="CB"/>
    <property type="match status" value="1"/>
</dbReference>
<dbReference type="PROSITE" id="PS51898">
    <property type="entry name" value="TYR_RECOMBINASE"/>
    <property type="match status" value="1"/>
</dbReference>
<sequence length="246" mass="28960">MINDINNFIESKKLSLNSRKSYHYDLKQFYKIIGGHVNSEKLALYQQSLSEFKLTARKRKLSAVNQFLFFLYNRGTLKEFYRLQETEKITLAQTKSQIMDLSNFYQDTDYPSGRLIALLILSLGLTPAEIANLKKADFDTTFNILSIEKSQMKRILKLPEDLLPFLLESLEEDGDLVFEHNGKPYSRQWFFNQLTDFLNEKNEQQLTAQLLREQFILKQKENGKTMTELSRLLGLKTPITLERYYR</sequence>
<proteinExistence type="inferred from homology"/>